<proteinExistence type="inferred from homology"/>
<sequence>MVANYASMMYHNGSNILGYGVLRLLQYNEQLMSGWESTMKDDIGYWRRFVHDFYTEKGTFRYNIDYKDSPNQEPKLFELSYAALPRFLYLSYCGKLKKMSFLLGNTKEFAIPNNGYFVESSRASILYQYQGGVQVIVSGHLRAHFFRAPLLKLDSLEFSAVGHSEYLLRELMTNASLALSQSRPPQNQIQHDGVKSEDPSSESVNINSSSSLLPDSPVNEYGLEPHIMRFMEITETISGMRDLIAFTLAQRSGPTSALHKFATALQQQHQMQKSTSSNIPYANPAPSGFNGSPRNGDVASLASNYRYAKQPPTMPANAISQANRLLDQNNIPNMDPSILPQSMPIASVPPYSLQGIKRQGTHSPMVEGENPNNNPNFYSSDMLNAQKRTKV</sequence>
<accession>O74364</accession>
<evidence type="ECO:0000256" key="1">
    <source>
        <dbReference type="SAM" id="MobiDB-lite"/>
    </source>
</evidence>
<evidence type="ECO:0000269" key="2">
    <source>
    </source>
</evidence>
<evidence type="ECO:0000305" key="3"/>
<protein>
    <recommendedName>
        <fullName>Adhesion defective protein 1</fullName>
    </recommendedName>
</protein>
<organism>
    <name type="scientific">Schizosaccharomyces pombe (strain 972 / ATCC 24843)</name>
    <name type="common">Fission yeast</name>
    <dbReference type="NCBI Taxonomy" id="284812"/>
    <lineage>
        <taxon>Eukaryota</taxon>
        <taxon>Fungi</taxon>
        <taxon>Dikarya</taxon>
        <taxon>Ascomycota</taxon>
        <taxon>Taphrinomycotina</taxon>
        <taxon>Schizosaccharomycetes</taxon>
        <taxon>Schizosaccharomycetales</taxon>
        <taxon>Schizosaccharomycetaceae</taxon>
        <taxon>Schizosaccharomyces</taxon>
    </lineage>
</organism>
<comment type="function">
    <text evidence="2">Probable transcriptional regulator involved in cell adhesion.</text>
</comment>
<comment type="subcellular location">
    <subcellularLocation>
        <location evidence="3">Nucleus</location>
    </subcellularLocation>
</comment>
<comment type="similarity">
    <text evidence="3">Belongs to the adn1/SEU family.</text>
</comment>
<dbReference type="EMBL" id="CU329671">
    <property type="protein sequence ID" value="CAA20316.1"/>
    <property type="molecule type" value="Genomic_DNA"/>
</dbReference>
<dbReference type="PIR" id="T40169">
    <property type="entry name" value="T40169"/>
</dbReference>
<dbReference type="RefSeq" id="NP_595528.1">
    <property type="nucleotide sequence ID" value="NM_001021438.2"/>
</dbReference>
<dbReference type="SMR" id="O74364"/>
<dbReference type="BioGRID" id="276865">
    <property type="interactions" value="17"/>
</dbReference>
<dbReference type="STRING" id="284812.O74364"/>
<dbReference type="iPTMnet" id="O74364"/>
<dbReference type="PaxDb" id="4896-SPBC30B4.03c.1"/>
<dbReference type="EnsemblFungi" id="SPBC30B4.03c.1">
    <property type="protein sequence ID" value="SPBC30B4.03c.1:pep"/>
    <property type="gene ID" value="SPBC30B4.03c"/>
</dbReference>
<dbReference type="GeneID" id="2540335"/>
<dbReference type="KEGG" id="spo:2540335"/>
<dbReference type="PomBase" id="SPBC30B4.03c">
    <property type="gene designation" value="adn1"/>
</dbReference>
<dbReference type="VEuPathDB" id="FungiDB:SPBC30B4.03c"/>
<dbReference type="eggNOG" id="ENOG502QTWZ">
    <property type="taxonomic scope" value="Eukaryota"/>
</dbReference>
<dbReference type="HOGENOM" id="CLU_706286_0_0_1"/>
<dbReference type="InParanoid" id="O74364"/>
<dbReference type="OMA" id="DIGYWRR"/>
<dbReference type="PhylomeDB" id="O74364"/>
<dbReference type="PRO" id="PR:O74364"/>
<dbReference type="Proteomes" id="UP000002485">
    <property type="component" value="Chromosome II"/>
</dbReference>
<dbReference type="GO" id="GO:0005737">
    <property type="term" value="C:cytoplasm"/>
    <property type="evidence" value="ECO:0000266"/>
    <property type="project" value="PomBase"/>
</dbReference>
<dbReference type="GO" id="GO:0005634">
    <property type="term" value="C:nucleus"/>
    <property type="evidence" value="ECO:0000318"/>
    <property type="project" value="GO_Central"/>
</dbReference>
<dbReference type="GO" id="GO:0005667">
    <property type="term" value="C:transcription regulator complex"/>
    <property type="evidence" value="ECO:0000318"/>
    <property type="project" value="GO_Central"/>
</dbReference>
<dbReference type="GO" id="GO:0003712">
    <property type="term" value="F:transcription coregulator activity"/>
    <property type="evidence" value="ECO:0000318"/>
    <property type="project" value="GO_Central"/>
</dbReference>
<dbReference type="GO" id="GO:0007155">
    <property type="term" value="P:cell adhesion"/>
    <property type="evidence" value="ECO:0007669"/>
    <property type="project" value="UniProtKB-KW"/>
</dbReference>
<dbReference type="GO" id="GO:0000122">
    <property type="term" value="P:negative regulation of transcription by RNA polymerase II"/>
    <property type="evidence" value="ECO:0000318"/>
    <property type="project" value="GO_Central"/>
</dbReference>
<dbReference type="GO" id="GO:0045944">
    <property type="term" value="P:positive regulation of transcription by RNA polymerase II"/>
    <property type="evidence" value="ECO:0000318"/>
    <property type="project" value="GO_Central"/>
</dbReference>
<dbReference type="InterPro" id="IPR029005">
    <property type="entry name" value="LIM-bd/SEUSS"/>
</dbReference>
<dbReference type="PANTHER" id="PTHR10378">
    <property type="entry name" value="LIM DOMAIN-BINDING PROTEIN"/>
    <property type="match status" value="1"/>
</dbReference>
<dbReference type="Pfam" id="PF01803">
    <property type="entry name" value="LIM_bind"/>
    <property type="match status" value="1"/>
</dbReference>
<reference key="1">
    <citation type="journal article" date="2002" name="Nature">
        <title>The genome sequence of Schizosaccharomyces pombe.</title>
        <authorList>
            <person name="Wood V."/>
            <person name="Gwilliam R."/>
            <person name="Rajandream M.A."/>
            <person name="Lyne M.H."/>
            <person name="Lyne R."/>
            <person name="Stewart A."/>
            <person name="Sgouros J.G."/>
            <person name="Peat N."/>
            <person name="Hayles J."/>
            <person name="Baker S.G."/>
            <person name="Basham D."/>
            <person name="Bowman S."/>
            <person name="Brooks K."/>
            <person name="Brown D."/>
            <person name="Brown S."/>
            <person name="Chillingworth T."/>
            <person name="Churcher C.M."/>
            <person name="Collins M."/>
            <person name="Connor R."/>
            <person name="Cronin A."/>
            <person name="Davis P."/>
            <person name="Feltwell T."/>
            <person name="Fraser A."/>
            <person name="Gentles S."/>
            <person name="Goble A."/>
            <person name="Hamlin N."/>
            <person name="Harris D.E."/>
            <person name="Hidalgo J."/>
            <person name="Hodgson G."/>
            <person name="Holroyd S."/>
            <person name="Hornsby T."/>
            <person name="Howarth S."/>
            <person name="Huckle E.J."/>
            <person name="Hunt S."/>
            <person name="Jagels K."/>
            <person name="James K.D."/>
            <person name="Jones L."/>
            <person name="Jones M."/>
            <person name="Leather S."/>
            <person name="McDonald S."/>
            <person name="McLean J."/>
            <person name="Mooney P."/>
            <person name="Moule S."/>
            <person name="Mungall K.L."/>
            <person name="Murphy L.D."/>
            <person name="Niblett D."/>
            <person name="Odell C."/>
            <person name="Oliver K."/>
            <person name="O'Neil S."/>
            <person name="Pearson D."/>
            <person name="Quail M.A."/>
            <person name="Rabbinowitsch E."/>
            <person name="Rutherford K.M."/>
            <person name="Rutter S."/>
            <person name="Saunders D."/>
            <person name="Seeger K."/>
            <person name="Sharp S."/>
            <person name="Skelton J."/>
            <person name="Simmonds M.N."/>
            <person name="Squares R."/>
            <person name="Squares S."/>
            <person name="Stevens K."/>
            <person name="Taylor K."/>
            <person name="Taylor R.G."/>
            <person name="Tivey A."/>
            <person name="Walsh S.V."/>
            <person name="Warren T."/>
            <person name="Whitehead S."/>
            <person name="Woodward J.R."/>
            <person name="Volckaert G."/>
            <person name="Aert R."/>
            <person name="Robben J."/>
            <person name="Grymonprez B."/>
            <person name="Weltjens I."/>
            <person name="Vanstreels E."/>
            <person name="Rieger M."/>
            <person name="Schaefer M."/>
            <person name="Mueller-Auer S."/>
            <person name="Gabel C."/>
            <person name="Fuchs M."/>
            <person name="Duesterhoeft A."/>
            <person name="Fritzc C."/>
            <person name="Holzer E."/>
            <person name="Moestl D."/>
            <person name="Hilbert H."/>
            <person name="Borzym K."/>
            <person name="Langer I."/>
            <person name="Beck A."/>
            <person name="Lehrach H."/>
            <person name="Reinhardt R."/>
            <person name="Pohl T.M."/>
            <person name="Eger P."/>
            <person name="Zimmermann W."/>
            <person name="Wedler H."/>
            <person name="Wambutt R."/>
            <person name="Purnelle B."/>
            <person name="Goffeau A."/>
            <person name="Cadieu E."/>
            <person name="Dreano S."/>
            <person name="Gloux S."/>
            <person name="Lelaure V."/>
            <person name="Mottier S."/>
            <person name="Galibert F."/>
            <person name="Aves S.J."/>
            <person name="Xiang Z."/>
            <person name="Hunt C."/>
            <person name="Moore K."/>
            <person name="Hurst S.M."/>
            <person name="Lucas M."/>
            <person name="Rochet M."/>
            <person name="Gaillardin C."/>
            <person name="Tallada V.A."/>
            <person name="Garzon A."/>
            <person name="Thode G."/>
            <person name="Daga R.R."/>
            <person name="Cruzado L."/>
            <person name="Jimenez J."/>
            <person name="Sanchez M."/>
            <person name="del Rey F."/>
            <person name="Benito J."/>
            <person name="Dominguez A."/>
            <person name="Revuelta J.L."/>
            <person name="Moreno S."/>
            <person name="Armstrong J."/>
            <person name="Forsburg S.L."/>
            <person name="Cerutti L."/>
            <person name="Lowe T."/>
            <person name="McCombie W.R."/>
            <person name="Paulsen I."/>
            <person name="Potashkin J."/>
            <person name="Shpakovski G.V."/>
            <person name="Ussery D."/>
            <person name="Barrell B.G."/>
            <person name="Nurse P."/>
        </authorList>
    </citation>
    <scope>NUCLEOTIDE SEQUENCE [LARGE SCALE GENOMIC DNA]</scope>
    <source>
        <strain>972 / ATCC 24843</strain>
    </source>
</reference>
<reference key="2">
    <citation type="journal article" date="2009" name="Eukaryot. Cell">
        <title>Functional genomics of adhesion, invasion, and mycelial formation in Schizosaccharomyces pombe.</title>
        <authorList>
            <person name="Dodgson J."/>
            <person name="Avula H."/>
            <person name="Hoe K.L."/>
            <person name="Kim D.U."/>
            <person name="Park H.O."/>
            <person name="Hayles J."/>
            <person name="Armstrong J."/>
        </authorList>
    </citation>
    <scope>FUNCTION</scope>
</reference>
<keyword id="KW-0130">Cell adhesion</keyword>
<keyword id="KW-0539">Nucleus</keyword>
<keyword id="KW-1185">Reference proteome</keyword>
<keyword id="KW-0804">Transcription</keyword>
<keyword id="KW-0805">Transcription regulation</keyword>
<gene>
    <name type="primary">adn1</name>
    <name type="ORF">SPBC30B4.03c</name>
</gene>
<feature type="chain" id="PRO_0000350969" description="Adhesion defective protein 1">
    <location>
        <begin position="1"/>
        <end position="391"/>
    </location>
</feature>
<feature type="region of interest" description="Disordered" evidence="1">
    <location>
        <begin position="180"/>
        <end position="217"/>
    </location>
</feature>
<feature type="region of interest" description="Disordered" evidence="1">
    <location>
        <begin position="366"/>
        <end position="391"/>
    </location>
</feature>
<feature type="compositionally biased region" description="Polar residues" evidence="1">
    <location>
        <begin position="180"/>
        <end position="190"/>
    </location>
</feature>
<feature type="compositionally biased region" description="Low complexity" evidence="1">
    <location>
        <begin position="201"/>
        <end position="211"/>
    </location>
</feature>
<feature type="compositionally biased region" description="Polar residues" evidence="1">
    <location>
        <begin position="370"/>
        <end position="383"/>
    </location>
</feature>
<name>ADN1_SCHPO</name>